<gene>
    <name type="primary">EOGT</name>
    <name type="synonym">AER61</name>
</gene>
<name>EOGT_CANLF</name>
<protein>
    <recommendedName>
        <fullName>EGF domain-specific O-linked N-acetylglucosamine transferase</fullName>
        <ecNumber evidence="2">2.4.1.255</ecNumber>
    </recommendedName>
    <alternativeName>
        <fullName>Extracellular O-linked N-acetylglucosamine transferase</fullName>
    </alternativeName>
</protein>
<keyword id="KW-0256">Endoplasmic reticulum</keyword>
<keyword id="KW-0325">Glycoprotein</keyword>
<keyword id="KW-0328">Glycosyltransferase</keyword>
<keyword id="KW-1185">Reference proteome</keyword>
<keyword id="KW-0732">Signal</keyword>
<keyword id="KW-0808">Transferase</keyword>
<comment type="function">
    <text evidence="2">Catalyzes the transfer of a single N-acetylglucosamine from UDP-GlcNAc to a serine or threonine residue in extracellular proteins resulting in their modification with a beta-linked N-acetylglucosamine (O-GlcNAc). Specifically glycosylates the Thr residue located between the fifth and sixth conserved cysteines of folded EGF-like domains.</text>
</comment>
<comment type="catalytic activity">
    <reaction evidence="2">
        <text>L-seryl-[protein] + UDP-N-acetyl-alpha-D-glucosamine = 3-O-(N-acetyl-beta-D-glucosaminyl)-L-seryl-[protein] + UDP + H(+)</text>
        <dbReference type="Rhea" id="RHEA:48904"/>
        <dbReference type="Rhea" id="RHEA-COMP:9863"/>
        <dbReference type="Rhea" id="RHEA-COMP:12251"/>
        <dbReference type="ChEBI" id="CHEBI:15378"/>
        <dbReference type="ChEBI" id="CHEBI:29999"/>
        <dbReference type="ChEBI" id="CHEBI:57705"/>
        <dbReference type="ChEBI" id="CHEBI:58223"/>
        <dbReference type="ChEBI" id="CHEBI:90838"/>
        <dbReference type="EC" id="2.4.1.255"/>
    </reaction>
</comment>
<comment type="catalytic activity">
    <reaction evidence="2">
        <text>L-threonyl-[protein] + UDP-N-acetyl-alpha-D-glucosamine = 3-O-(N-acetyl-beta-D-glucosaminyl)-L-threonyl-[protein] + UDP + H(+)</text>
        <dbReference type="Rhea" id="RHEA:48908"/>
        <dbReference type="Rhea" id="RHEA-COMP:11060"/>
        <dbReference type="Rhea" id="RHEA-COMP:12252"/>
        <dbReference type="ChEBI" id="CHEBI:15378"/>
        <dbReference type="ChEBI" id="CHEBI:30013"/>
        <dbReference type="ChEBI" id="CHEBI:57705"/>
        <dbReference type="ChEBI" id="CHEBI:58223"/>
        <dbReference type="ChEBI" id="CHEBI:90840"/>
        <dbReference type="EC" id="2.4.1.255"/>
    </reaction>
</comment>
<comment type="subcellular location">
    <subcellularLocation>
        <location evidence="4">Endoplasmic reticulum lumen</location>
    </subcellularLocation>
</comment>
<comment type="similarity">
    <text evidence="5">Belongs to the glycosyltransferase 61 family.</text>
</comment>
<organism>
    <name type="scientific">Canis lupus familiaris</name>
    <name type="common">Dog</name>
    <name type="synonym">Canis familiaris</name>
    <dbReference type="NCBI Taxonomy" id="9615"/>
    <lineage>
        <taxon>Eukaryota</taxon>
        <taxon>Metazoa</taxon>
        <taxon>Chordata</taxon>
        <taxon>Craniata</taxon>
        <taxon>Vertebrata</taxon>
        <taxon>Euteleostomi</taxon>
        <taxon>Mammalia</taxon>
        <taxon>Eutheria</taxon>
        <taxon>Laurasiatheria</taxon>
        <taxon>Carnivora</taxon>
        <taxon>Caniformia</taxon>
        <taxon>Canidae</taxon>
        <taxon>Canis</taxon>
    </lineage>
</organism>
<accession>Q5NDL9</accession>
<proteinExistence type="evidence at transcript level"/>
<dbReference type="EC" id="2.4.1.255" evidence="2"/>
<dbReference type="EMBL" id="AJ868227">
    <property type="protein sequence ID" value="CAI30562.1"/>
    <property type="molecule type" value="mRNA"/>
</dbReference>
<dbReference type="RefSeq" id="NP_001009187.1">
    <property type="nucleotide sequence ID" value="NM_001009187.1"/>
</dbReference>
<dbReference type="RefSeq" id="XP_005632096.1">
    <property type="nucleotide sequence ID" value="XM_005632039.2"/>
</dbReference>
<dbReference type="RefSeq" id="XP_038282429.1">
    <property type="nucleotide sequence ID" value="XM_038426501.1"/>
</dbReference>
<dbReference type="RefSeq" id="XP_038282430.1">
    <property type="nucleotide sequence ID" value="XM_038426502.1"/>
</dbReference>
<dbReference type="RefSeq" id="XP_038282431.1">
    <property type="nucleotide sequence ID" value="XM_038426503.1"/>
</dbReference>
<dbReference type="RefSeq" id="XP_038282432.1">
    <property type="nucleotide sequence ID" value="XM_038426504.1"/>
</dbReference>
<dbReference type="RefSeq" id="XP_038282433.1">
    <property type="nucleotide sequence ID" value="XM_038426505.1"/>
</dbReference>
<dbReference type="SMR" id="Q5NDL9"/>
<dbReference type="FunCoup" id="Q5NDL9">
    <property type="interactions" value="251"/>
</dbReference>
<dbReference type="STRING" id="9615.ENSCAFP00000009819"/>
<dbReference type="CAZy" id="GT61">
    <property type="family name" value="Glycosyltransferase Family 61"/>
</dbReference>
<dbReference type="GlyCosmos" id="Q5NDL9">
    <property type="glycosylation" value="1 site, No reported glycans"/>
</dbReference>
<dbReference type="PaxDb" id="9612-ENSCAFP00000009819"/>
<dbReference type="Ensembl" id="ENSCAFT00000100768.1">
    <property type="protein sequence ID" value="ENSCAFP00000067862.1"/>
    <property type="gene ID" value="ENSCAFG00000006563.5"/>
</dbReference>
<dbReference type="Ensembl" id="ENSCAFT00845019440.1">
    <property type="protein sequence ID" value="ENSCAFP00845015200.1"/>
    <property type="gene ID" value="ENSCAFG00845010941.1"/>
</dbReference>
<dbReference type="GeneID" id="494221"/>
<dbReference type="KEGG" id="cfa:494221"/>
<dbReference type="CTD" id="285203"/>
<dbReference type="VEuPathDB" id="HostDB:ENSCAFG00845010941"/>
<dbReference type="VGNC" id="VGNC:40388">
    <property type="gene designation" value="EOGT"/>
</dbReference>
<dbReference type="eggNOG" id="KOG4698">
    <property type="taxonomic scope" value="Eukaryota"/>
</dbReference>
<dbReference type="GeneTree" id="ENSGT00940000156493"/>
<dbReference type="InParanoid" id="Q5NDL9"/>
<dbReference type="OrthoDB" id="529273at2759"/>
<dbReference type="Proteomes" id="UP000002254">
    <property type="component" value="Chromosome 20"/>
</dbReference>
<dbReference type="Proteomes" id="UP000694429">
    <property type="component" value="Unplaced"/>
</dbReference>
<dbReference type="Proteomes" id="UP000694542">
    <property type="component" value="Unplaced"/>
</dbReference>
<dbReference type="Proteomes" id="UP000805418">
    <property type="component" value="Chromosome 20"/>
</dbReference>
<dbReference type="Bgee" id="ENSCAFG00000006563">
    <property type="expression patterns" value="Expressed in keratinocyte and 48 other cell types or tissues"/>
</dbReference>
<dbReference type="GO" id="GO:0005788">
    <property type="term" value="C:endoplasmic reticulum lumen"/>
    <property type="evidence" value="ECO:0000318"/>
    <property type="project" value="GO_Central"/>
</dbReference>
<dbReference type="GO" id="GO:0097363">
    <property type="term" value="F:protein O-acetylglucosaminyltransferase activity"/>
    <property type="evidence" value="ECO:0000250"/>
    <property type="project" value="UniProtKB"/>
</dbReference>
<dbReference type="GO" id="GO:0097370">
    <property type="term" value="P:protein O-GlcNAcylation via threonine"/>
    <property type="evidence" value="ECO:0000318"/>
    <property type="project" value="GO_Central"/>
</dbReference>
<dbReference type="GO" id="GO:0006493">
    <property type="term" value="P:protein O-linked glycosylation"/>
    <property type="evidence" value="ECO:0000250"/>
    <property type="project" value="UniProtKB"/>
</dbReference>
<dbReference type="InterPro" id="IPR049625">
    <property type="entry name" value="Glyco_transf_61_cat"/>
</dbReference>
<dbReference type="InterPro" id="IPR007657">
    <property type="entry name" value="Glycosyltransferase_61"/>
</dbReference>
<dbReference type="PANTHER" id="PTHR20961:SF148">
    <property type="entry name" value="EGF DOMAIN-SPECIFIC O-LINKED N-ACETYLGLUCOSAMINE TRANSFERASE"/>
    <property type="match status" value="1"/>
</dbReference>
<dbReference type="PANTHER" id="PTHR20961">
    <property type="entry name" value="GLYCOSYLTRANSFERASE"/>
    <property type="match status" value="1"/>
</dbReference>
<dbReference type="Pfam" id="PF04577">
    <property type="entry name" value="Glyco_transf_61"/>
    <property type="match status" value="1"/>
</dbReference>
<dbReference type="PROSITE" id="PS00014">
    <property type="entry name" value="ER_TARGET"/>
    <property type="match status" value="1"/>
</dbReference>
<feature type="signal peptide" evidence="3">
    <location>
        <begin position="1"/>
        <end position="17"/>
    </location>
</feature>
<feature type="chain" id="PRO_0000301971" description="EGF domain-specific O-linked N-acetylglucosamine transferase">
    <location>
        <begin position="18"/>
        <end position="527"/>
    </location>
</feature>
<feature type="short sequence motif" description="Required for optimal activity" evidence="1">
    <location>
        <begin position="295"/>
        <end position="297"/>
    </location>
</feature>
<feature type="short sequence motif" description="Prevents secretion from ER" evidence="4">
    <location>
        <begin position="524"/>
        <end position="527"/>
    </location>
</feature>
<feature type="glycosylation site" description="N-linked (GlcNAc...) asparagine" evidence="3">
    <location>
        <position position="354"/>
    </location>
</feature>
<evidence type="ECO:0000250" key="1"/>
<evidence type="ECO:0000250" key="2">
    <source>
        <dbReference type="UniProtKB" id="Q8BYW9"/>
    </source>
</evidence>
<evidence type="ECO:0000255" key="3"/>
<evidence type="ECO:0000255" key="4">
    <source>
        <dbReference type="PROSITE-ProRule" id="PRU10138"/>
    </source>
</evidence>
<evidence type="ECO:0000305" key="5"/>
<sequence>MLKLLVLGVLLHDVSLSGQDEAPPKADGIPGEPLFNYASIRLPEEHIPFFLHNNRHIATVCKKDSHCPYKKHLENLKYCWGYEKSCKPEFRFGYPVCTYIDMGWTDTLESAQDIFWKQADFGYAGERLEELHVLCQPEEPHDSSLLCSRYLQYCRAANLYLDLRNIKRNHDRFKEDFFQSGEIGGHCTLDTQTLLSEGQRKSPLQSWFAELQSYTELNFRPIEDAKCDVVIEKPTYFMKLDAGVNMYHHFCDFVNLYITQHVNNSFSTDVYIVMWDTSSYGYGDLFSDTWKAFTDYDVIHLKTYDSKRVCFKEAVFSLLPRMRYGLFYNTPLISGCQNTGLFRAFSQHVLHRLNITQEGPKDGKIRVTILARSTEYRKILNQNELVNALKTVSTLEVQIVDYKYKELGFLDQLRITHNTDIFIGMHGAGLTHLLFLPDWAAVFELYNCEDERCYLDLARLRGVHYITWRRQNKVFPQDKGHHPTLGEHPKFTNYSFDVEEFMYLVLQAADHVLQHPKWPFKKKRDEL</sequence>
<reference key="1">
    <citation type="submission" date="2004-12" db="EMBL/GenBank/DDBJ databases">
        <title>Phylogeny of xylosyltransferases.</title>
        <authorList>
            <person name="Kiefer-Meyer M.C."/>
            <person name="Pagny S."/>
            <person name="Durambure G."/>
            <person name="Faye L."/>
            <person name="Gomord V."/>
            <person name="Mollicone R."/>
            <person name="Oriol R."/>
        </authorList>
    </citation>
    <scope>NUCLEOTIDE SEQUENCE [MRNA]</scope>
</reference>